<dbReference type="EC" id="6.3.2.2" evidence="4 5"/>
<dbReference type="EMBL" id="M90656">
    <property type="protein sequence ID" value="AAA58499.1"/>
    <property type="molecule type" value="mRNA"/>
</dbReference>
<dbReference type="EMBL" id="AY780794">
    <property type="protein sequence ID" value="AAV31778.1"/>
    <property type="molecule type" value="Genomic_DNA"/>
</dbReference>
<dbReference type="EMBL" id="AL033397">
    <property type="status" value="NOT_ANNOTATED_CDS"/>
    <property type="molecule type" value="Genomic_DNA"/>
</dbReference>
<dbReference type="EMBL" id="BC022487">
    <property type="protein sequence ID" value="AAH22487.1"/>
    <property type="molecule type" value="mRNA"/>
</dbReference>
<dbReference type="EMBL" id="BC039894">
    <property type="protein sequence ID" value="AAH39894.1"/>
    <property type="molecule type" value="mRNA"/>
</dbReference>
<dbReference type="EMBL" id="L39773">
    <property type="protein sequence ID" value="AAC41751.1"/>
    <property type="molecule type" value="Genomic_DNA"/>
</dbReference>
<dbReference type="EMBL" id="AF118846">
    <property type="protein sequence ID" value="AAD18031.1"/>
    <property type="molecule type" value="Genomic_DNA"/>
</dbReference>
<dbReference type="CCDS" id="CCDS4952.1"/>
<dbReference type="PIR" id="JH0611">
    <property type="entry name" value="JH0611"/>
</dbReference>
<dbReference type="RefSeq" id="NP_001184044.1">
    <property type="nucleotide sequence ID" value="NM_001197115.1"/>
</dbReference>
<dbReference type="RefSeq" id="NP_001489.1">
    <property type="nucleotide sequence ID" value="NM_001498.4"/>
</dbReference>
<dbReference type="RefSeq" id="XP_054211163.1">
    <property type="nucleotide sequence ID" value="XM_054355188.1"/>
</dbReference>
<dbReference type="SMR" id="P48506"/>
<dbReference type="BioGRID" id="108991">
    <property type="interactions" value="39"/>
</dbReference>
<dbReference type="ComplexPortal" id="CPX-2865">
    <property type="entry name" value="Glutamate-cysteine ligase complex"/>
</dbReference>
<dbReference type="CORUM" id="P48506"/>
<dbReference type="FunCoup" id="P48506">
    <property type="interactions" value="1002"/>
</dbReference>
<dbReference type="IntAct" id="P48506">
    <property type="interactions" value="7"/>
</dbReference>
<dbReference type="STRING" id="9606.ENSP00000497574"/>
<dbReference type="BindingDB" id="P48506"/>
<dbReference type="ChEMBL" id="CHEMBL4055"/>
<dbReference type="DrugBank" id="DB14001">
    <property type="generic name" value="alpha-Tocopherol succinate"/>
</dbReference>
<dbReference type="DrugBank" id="DB00151">
    <property type="generic name" value="Cysteine"/>
</dbReference>
<dbReference type="DrugBank" id="DB14002">
    <property type="generic name" value="D-alpha-Tocopherol acetate"/>
</dbReference>
<dbReference type="DrugBank" id="DB00142">
    <property type="generic name" value="Glutamic acid"/>
</dbReference>
<dbReference type="DrugBank" id="DB00163">
    <property type="generic name" value="Vitamin E"/>
</dbReference>
<dbReference type="iPTMnet" id="P48506"/>
<dbReference type="PhosphoSitePlus" id="P48506"/>
<dbReference type="BioMuta" id="GCLC"/>
<dbReference type="DMDM" id="1346190"/>
<dbReference type="jPOST" id="P48506"/>
<dbReference type="MassIVE" id="P48506"/>
<dbReference type="PaxDb" id="9606-ENSP00000229416"/>
<dbReference type="PeptideAtlas" id="P48506"/>
<dbReference type="ProteomicsDB" id="55896"/>
<dbReference type="Pumba" id="P48506"/>
<dbReference type="Antibodypedia" id="4035">
    <property type="antibodies" value="424 antibodies from 35 providers"/>
</dbReference>
<dbReference type="DNASU" id="2729"/>
<dbReference type="Ensembl" id="ENST00000650454.1">
    <property type="protein sequence ID" value="ENSP00000497574.1"/>
    <property type="gene ID" value="ENSG00000001084.13"/>
</dbReference>
<dbReference type="GeneID" id="2729"/>
<dbReference type="KEGG" id="hsa:2729"/>
<dbReference type="MANE-Select" id="ENST00000650454.1">
    <property type="protein sequence ID" value="ENSP00000497574.1"/>
    <property type="RefSeq nucleotide sequence ID" value="NM_001498.4"/>
    <property type="RefSeq protein sequence ID" value="NP_001489.1"/>
</dbReference>
<dbReference type="UCSC" id="uc003pbx.5">
    <property type="organism name" value="human"/>
</dbReference>
<dbReference type="AGR" id="HGNC:4311"/>
<dbReference type="CTD" id="2729"/>
<dbReference type="DisGeNET" id="2729"/>
<dbReference type="GeneCards" id="GCLC"/>
<dbReference type="HGNC" id="HGNC:4311">
    <property type="gene designation" value="GCLC"/>
</dbReference>
<dbReference type="HPA" id="ENSG00000001084">
    <property type="expression patterns" value="Tissue enhanced (liver)"/>
</dbReference>
<dbReference type="MalaCards" id="GCLC"/>
<dbReference type="MIM" id="230450">
    <property type="type" value="phenotype"/>
</dbReference>
<dbReference type="MIM" id="606857">
    <property type="type" value="gene+phenotype"/>
</dbReference>
<dbReference type="neXtProt" id="NX_P48506"/>
<dbReference type="OpenTargets" id="ENSG00000001084"/>
<dbReference type="Orphanet" id="586">
    <property type="disease" value="Cystic fibrosis"/>
</dbReference>
<dbReference type="Orphanet" id="33574">
    <property type="disease" value="Glutamate-cysteine ligase deficiency"/>
</dbReference>
<dbReference type="PharmGKB" id="PA28612"/>
<dbReference type="VEuPathDB" id="HostDB:ENSG00000001084"/>
<dbReference type="eggNOG" id="KOG3754">
    <property type="taxonomic scope" value="Eukaryota"/>
</dbReference>
<dbReference type="GeneTree" id="ENSGT00390000011908"/>
<dbReference type="HOGENOM" id="CLU_010467_0_0_1"/>
<dbReference type="InParanoid" id="P48506"/>
<dbReference type="OMA" id="IAHMFIR"/>
<dbReference type="OrthoDB" id="7939818at2759"/>
<dbReference type="PAN-GO" id="P48506">
    <property type="GO annotations" value="3 GO annotations based on evolutionary models"/>
</dbReference>
<dbReference type="PhylomeDB" id="P48506"/>
<dbReference type="TreeFam" id="TF105644"/>
<dbReference type="BioCyc" id="MetaCyc:ENSG00000001084-MONOMER"/>
<dbReference type="BRENDA" id="6.3.2.2">
    <property type="organism ID" value="2681"/>
</dbReference>
<dbReference type="PathwayCommons" id="P48506"/>
<dbReference type="Reactome" id="R-HSA-174403">
    <property type="pathway name" value="Glutathione synthesis and recycling"/>
</dbReference>
<dbReference type="Reactome" id="R-HSA-5578999">
    <property type="pathway name" value="Defective GCLC causes HAGGSD"/>
</dbReference>
<dbReference type="Reactome" id="R-HSA-9818027">
    <property type="pathway name" value="NFE2L2 regulating anti-oxidant/detoxification enzymes"/>
</dbReference>
<dbReference type="SignaLink" id="P48506"/>
<dbReference type="SIGNOR" id="P48506"/>
<dbReference type="UniPathway" id="UPA00142">
    <property type="reaction ID" value="UER00209"/>
</dbReference>
<dbReference type="BioGRID-ORCS" id="2729">
    <property type="hits" value="72 hits in 1168 CRISPR screens"/>
</dbReference>
<dbReference type="ChiTaRS" id="GCLC">
    <property type="organism name" value="human"/>
</dbReference>
<dbReference type="GeneWiki" id="GCLC"/>
<dbReference type="GenomeRNAi" id="2729"/>
<dbReference type="Pharos" id="P48506">
    <property type="development level" value="Tchem"/>
</dbReference>
<dbReference type="PRO" id="PR:P48506"/>
<dbReference type="Proteomes" id="UP000005640">
    <property type="component" value="Chromosome 6"/>
</dbReference>
<dbReference type="RNAct" id="P48506">
    <property type="molecule type" value="protein"/>
</dbReference>
<dbReference type="Bgee" id="ENSG00000001084">
    <property type="expression patterns" value="Expressed in bronchial epithelial cell and 211 other cell types or tissues"/>
</dbReference>
<dbReference type="ExpressionAtlas" id="P48506">
    <property type="expression patterns" value="baseline and differential"/>
</dbReference>
<dbReference type="GO" id="GO:0005829">
    <property type="term" value="C:cytosol"/>
    <property type="evidence" value="ECO:0000304"/>
    <property type="project" value="Reactome"/>
</dbReference>
<dbReference type="GO" id="GO:0017109">
    <property type="term" value="C:glutamate-cysteine ligase complex"/>
    <property type="evidence" value="ECO:0000314"/>
    <property type="project" value="UniProtKB"/>
</dbReference>
<dbReference type="GO" id="GO:0005739">
    <property type="term" value="C:mitochondrion"/>
    <property type="evidence" value="ECO:0007669"/>
    <property type="project" value="GOC"/>
</dbReference>
<dbReference type="GO" id="GO:0043531">
    <property type="term" value="F:ADP binding"/>
    <property type="evidence" value="ECO:0000314"/>
    <property type="project" value="UniProtKB"/>
</dbReference>
<dbReference type="GO" id="GO:0005524">
    <property type="term" value="F:ATP binding"/>
    <property type="evidence" value="ECO:0007669"/>
    <property type="project" value="UniProtKB-KW"/>
</dbReference>
<dbReference type="GO" id="GO:0016595">
    <property type="term" value="F:glutamate binding"/>
    <property type="evidence" value="ECO:0000314"/>
    <property type="project" value="UniProtKB"/>
</dbReference>
<dbReference type="GO" id="GO:0004357">
    <property type="term" value="F:glutamate-cysteine ligase activity"/>
    <property type="evidence" value="ECO:0000314"/>
    <property type="project" value="UniProtKB"/>
</dbReference>
<dbReference type="GO" id="GO:0000287">
    <property type="term" value="F:magnesium ion binding"/>
    <property type="evidence" value="ECO:0000314"/>
    <property type="project" value="UniProtKB"/>
</dbReference>
<dbReference type="GO" id="GO:0044877">
    <property type="term" value="F:protein-containing complex binding"/>
    <property type="evidence" value="ECO:0007669"/>
    <property type="project" value="Ensembl"/>
</dbReference>
<dbReference type="GO" id="GO:0097746">
    <property type="term" value="P:blood vessel diameter maintenance"/>
    <property type="evidence" value="ECO:0000315"/>
    <property type="project" value="UniProtKB"/>
</dbReference>
<dbReference type="GO" id="GO:0045454">
    <property type="term" value="P:cell redox homeostasis"/>
    <property type="evidence" value="ECO:0000314"/>
    <property type="project" value="UniProtKB"/>
</dbReference>
<dbReference type="GO" id="GO:0044344">
    <property type="term" value="P:cellular response to fibroblast growth factor stimulus"/>
    <property type="evidence" value="ECO:0007669"/>
    <property type="project" value="Ensembl"/>
</dbReference>
<dbReference type="GO" id="GO:0071372">
    <property type="term" value="P:cellular response to follicle-stimulating hormone stimulus"/>
    <property type="evidence" value="ECO:0007669"/>
    <property type="project" value="Ensembl"/>
</dbReference>
<dbReference type="GO" id="GO:0071333">
    <property type="term" value="P:cellular response to glucose stimulus"/>
    <property type="evidence" value="ECO:0007669"/>
    <property type="project" value="Ensembl"/>
</dbReference>
<dbReference type="GO" id="GO:0035729">
    <property type="term" value="P:cellular response to hepatocyte growth factor stimulus"/>
    <property type="evidence" value="ECO:0007669"/>
    <property type="project" value="Ensembl"/>
</dbReference>
<dbReference type="GO" id="GO:0032869">
    <property type="term" value="P:cellular response to insulin stimulus"/>
    <property type="evidence" value="ECO:0007669"/>
    <property type="project" value="Ensembl"/>
</dbReference>
<dbReference type="GO" id="GO:0071260">
    <property type="term" value="P:cellular response to mechanical stimulus"/>
    <property type="evidence" value="ECO:0007669"/>
    <property type="project" value="Ensembl"/>
</dbReference>
<dbReference type="GO" id="GO:0097069">
    <property type="term" value="P:cellular response to thyroxine stimulus"/>
    <property type="evidence" value="ECO:0007669"/>
    <property type="project" value="Ensembl"/>
</dbReference>
<dbReference type="GO" id="GO:0006534">
    <property type="term" value="P:cysteine metabolic process"/>
    <property type="evidence" value="ECO:0000314"/>
    <property type="project" value="UniProtKB"/>
</dbReference>
<dbReference type="GO" id="GO:0006536">
    <property type="term" value="P:glutamate metabolic process"/>
    <property type="evidence" value="ECO:0000314"/>
    <property type="project" value="UniProtKB"/>
</dbReference>
<dbReference type="GO" id="GO:0006750">
    <property type="term" value="P:glutathione biosynthetic process"/>
    <property type="evidence" value="ECO:0000314"/>
    <property type="project" value="UniProtKB"/>
</dbReference>
<dbReference type="GO" id="GO:0019852">
    <property type="term" value="P:L-ascorbic acid metabolic process"/>
    <property type="evidence" value="ECO:0007669"/>
    <property type="project" value="Ensembl"/>
</dbReference>
<dbReference type="GO" id="GO:0043066">
    <property type="term" value="P:negative regulation of apoptotic process"/>
    <property type="evidence" value="ECO:0000314"/>
    <property type="project" value="UniProtKB"/>
</dbReference>
<dbReference type="GO" id="GO:0045892">
    <property type="term" value="P:negative regulation of DNA-templated transcription"/>
    <property type="evidence" value="ECO:0000314"/>
    <property type="project" value="UniProtKB"/>
</dbReference>
<dbReference type="GO" id="GO:2001237">
    <property type="term" value="P:negative regulation of extrinsic apoptotic signaling pathway"/>
    <property type="evidence" value="ECO:0007669"/>
    <property type="project" value="Ensembl"/>
</dbReference>
<dbReference type="GO" id="GO:2000490">
    <property type="term" value="P:negative regulation of hepatic stellate cell activation"/>
    <property type="evidence" value="ECO:0007669"/>
    <property type="project" value="Ensembl"/>
</dbReference>
<dbReference type="GO" id="GO:1901029">
    <property type="term" value="P:negative regulation of mitochondrial outer membrane permeabilization involved in apoptotic signaling pathway"/>
    <property type="evidence" value="ECO:0007669"/>
    <property type="project" value="Ensembl"/>
</dbReference>
<dbReference type="GO" id="GO:0043524">
    <property type="term" value="P:negative regulation of neuron apoptotic process"/>
    <property type="evidence" value="ECO:0007669"/>
    <property type="project" value="Ensembl"/>
</dbReference>
<dbReference type="GO" id="GO:0031397">
    <property type="term" value="P:negative regulation of protein ubiquitination"/>
    <property type="evidence" value="ECO:0007669"/>
    <property type="project" value="Ensembl"/>
</dbReference>
<dbReference type="GO" id="GO:0032436">
    <property type="term" value="P:positive regulation of proteasomal ubiquitin-dependent protein catabolic process"/>
    <property type="evidence" value="ECO:0007669"/>
    <property type="project" value="Ensembl"/>
</dbReference>
<dbReference type="GO" id="GO:0051900">
    <property type="term" value="P:regulation of mitochondrial depolarization"/>
    <property type="evidence" value="ECO:0007669"/>
    <property type="project" value="Ensembl"/>
</dbReference>
<dbReference type="GO" id="GO:0014823">
    <property type="term" value="P:response to activity"/>
    <property type="evidence" value="ECO:0007669"/>
    <property type="project" value="Ensembl"/>
</dbReference>
<dbReference type="GO" id="GO:0046685">
    <property type="term" value="P:response to arsenic-containing substance"/>
    <property type="evidence" value="ECO:0007669"/>
    <property type="project" value="Ensembl"/>
</dbReference>
<dbReference type="GO" id="GO:0046686">
    <property type="term" value="P:response to cadmium ion"/>
    <property type="evidence" value="ECO:0007669"/>
    <property type="project" value="Ensembl"/>
</dbReference>
<dbReference type="GO" id="GO:0009408">
    <property type="term" value="P:response to heat"/>
    <property type="evidence" value="ECO:0000314"/>
    <property type="project" value="UniProtKB"/>
</dbReference>
<dbReference type="GO" id="GO:0009725">
    <property type="term" value="P:response to hormone"/>
    <property type="evidence" value="ECO:0000314"/>
    <property type="project" value="UniProtKB"/>
</dbReference>
<dbReference type="GO" id="GO:0044752">
    <property type="term" value="P:response to human chorionic gonadotropin"/>
    <property type="evidence" value="ECO:0007669"/>
    <property type="project" value="Ensembl"/>
</dbReference>
<dbReference type="GO" id="GO:0070555">
    <property type="term" value="P:response to interleukin-1"/>
    <property type="evidence" value="ECO:0007669"/>
    <property type="project" value="Ensembl"/>
</dbReference>
<dbReference type="GO" id="GO:0051409">
    <property type="term" value="P:response to nitrosative stress"/>
    <property type="evidence" value="ECO:0007669"/>
    <property type="project" value="Ensembl"/>
</dbReference>
<dbReference type="GO" id="GO:0007584">
    <property type="term" value="P:response to nutrient"/>
    <property type="evidence" value="ECO:0007669"/>
    <property type="project" value="Ensembl"/>
</dbReference>
<dbReference type="GO" id="GO:0006979">
    <property type="term" value="P:response to oxidative stress"/>
    <property type="evidence" value="ECO:0000314"/>
    <property type="project" value="UniProtKB"/>
</dbReference>
<dbReference type="GO" id="GO:0009410">
    <property type="term" value="P:response to xenobiotic stimulus"/>
    <property type="evidence" value="ECO:0007669"/>
    <property type="project" value="Ensembl"/>
</dbReference>
<dbReference type="FunFam" id="1.10.8.960:FF:000001">
    <property type="entry name" value="Glutamate--cysteine ligase catalytic subunit"/>
    <property type="match status" value="1"/>
</dbReference>
<dbReference type="FunFam" id="3.30.590.50:FF:000002">
    <property type="entry name" value="Glutamate--cysteine ligase catalytic subunit"/>
    <property type="match status" value="1"/>
</dbReference>
<dbReference type="FunFam" id="3.30.590.50:FF:000003">
    <property type="entry name" value="Glutamate--cysteine ligase catalytic subunit"/>
    <property type="match status" value="1"/>
</dbReference>
<dbReference type="Gene3D" id="1.10.8.960">
    <property type="match status" value="1"/>
</dbReference>
<dbReference type="Gene3D" id="3.30.590.50">
    <property type="match status" value="2"/>
</dbReference>
<dbReference type="InterPro" id="IPR004308">
    <property type="entry name" value="GCS"/>
</dbReference>
<dbReference type="InterPro" id="IPR014746">
    <property type="entry name" value="Gln_synth/guanido_kin_cat_dom"/>
</dbReference>
<dbReference type="PANTHER" id="PTHR11164">
    <property type="entry name" value="GLUTAMATE CYSTEINE LIGASE"/>
    <property type="match status" value="1"/>
</dbReference>
<dbReference type="PANTHER" id="PTHR11164:SF0">
    <property type="entry name" value="GLUTAMATE--CYSTEINE LIGASE CATALYTIC SUBUNIT"/>
    <property type="match status" value="1"/>
</dbReference>
<dbReference type="Pfam" id="PF03074">
    <property type="entry name" value="GCS"/>
    <property type="match status" value="1"/>
</dbReference>
<dbReference type="SUPFAM" id="SSF55931">
    <property type="entry name" value="Glutamine synthetase/guanido kinase"/>
    <property type="match status" value="1"/>
</dbReference>
<proteinExistence type="evidence at protein level"/>
<reference key="1">
    <citation type="journal article" date="1992" name="Biochem. Biophys. Res. Commun.">
        <title>Cloning and nucleotide sequence of a full-length cDNA for human liver gamma-glutamylcysteine synthetase.</title>
        <authorList>
            <person name="Gipp J.J."/>
            <person name="Chang C."/>
            <person name="Mulcahy R.T."/>
        </authorList>
    </citation>
    <scope>NUCLEOTIDE SEQUENCE [MRNA]</scope>
    <source>
        <tissue>Liver</tissue>
    </source>
</reference>
<reference key="2">
    <citation type="submission" date="2004-10" db="EMBL/GenBank/DDBJ databases">
        <authorList>
            <consortium name="NIEHS SNPs program"/>
        </authorList>
    </citation>
    <scope>NUCLEOTIDE SEQUENCE [GENOMIC DNA]</scope>
    <scope>VARIANT SER-462</scope>
</reference>
<reference key="3">
    <citation type="journal article" date="2003" name="Nature">
        <title>The DNA sequence and analysis of human chromosome 6.</title>
        <authorList>
            <person name="Mungall A.J."/>
            <person name="Palmer S.A."/>
            <person name="Sims S.K."/>
            <person name="Edwards C.A."/>
            <person name="Ashurst J.L."/>
            <person name="Wilming L."/>
            <person name="Jones M.C."/>
            <person name="Horton R."/>
            <person name="Hunt S.E."/>
            <person name="Scott C.E."/>
            <person name="Gilbert J.G.R."/>
            <person name="Clamp M.E."/>
            <person name="Bethel G."/>
            <person name="Milne S."/>
            <person name="Ainscough R."/>
            <person name="Almeida J.P."/>
            <person name="Ambrose K.D."/>
            <person name="Andrews T.D."/>
            <person name="Ashwell R.I.S."/>
            <person name="Babbage A.K."/>
            <person name="Bagguley C.L."/>
            <person name="Bailey J."/>
            <person name="Banerjee R."/>
            <person name="Barker D.J."/>
            <person name="Barlow K.F."/>
            <person name="Bates K."/>
            <person name="Beare D.M."/>
            <person name="Beasley H."/>
            <person name="Beasley O."/>
            <person name="Bird C.P."/>
            <person name="Blakey S.E."/>
            <person name="Bray-Allen S."/>
            <person name="Brook J."/>
            <person name="Brown A.J."/>
            <person name="Brown J.Y."/>
            <person name="Burford D.C."/>
            <person name="Burrill W."/>
            <person name="Burton J."/>
            <person name="Carder C."/>
            <person name="Carter N.P."/>
            <person name="Chapman J.C."/>
            <person name="Clark S.Y."/>
            <person name="Clark G."/>
            <person name="Clee C.M."/>
            <person name="Clegg S."/>
            <person name="Cobley V."/>
            <person name="Collier R.E."/>
            <person name="Collins J.E."/>
            <person name="Colman L.K."/>
            <person name="Corby N.R."/>
            <person name="Coville G.J."/>
            <person name="Culley K.M."/>
            <person name="Dhami P."/>
            <person name="Davies J."/>
            <person name="Dunn M."/>
            <person name="Earthrowl M.E."/>
            <person name="Ellington A.E."/>
            <person name="Evans K.A."/>
            <person name="Faulkner L."/>
            <person name="Francis M.D."/>
            <person name="Frankish A."/>
            <person name="Frankland J."/>
            <person name="French L."/>
            <person name="Garner P."/>
            <person name="Garnett J."/>
            <person name="Ghori M.J."/>
            <person name="Gilby L.M."/>
            <person name="Gillson C.J."/>
            <person name="Glithero R.J."/>
            <person name="Grafham D.V."/>
            <person name="Grant M."/>
            <person name="Gribble S."/>
            <person name="Griffiths C."/>
            <person name="Griffiths M.N.D."/>
            <person name="Hall R."/>
            <person name="Halls K.S."/>
            <person name="Hammond S."/>
            <person name="Harley J.L."/>
            <person name="Hart E.A."/>
            <person name="Heath P.D."/>
            <person name="Heathcott R."/>
            <person name="Holmes S.J."/>
            <person name="Howden P.J."/>
            <person name="Howe K.L."/>
            <person name="Howell G.R."/>
            <person name="Huckle E."/>
            <person name="Humphray S.J."/>
            <person name="Humphries M.D."/>
            <person name="Hunt A.R."/>
            <person name="Johnson C.M."/>
            <person name="Joy A.A."/>
            <person name="Kay M."/>
            <person name="Keenan S.J."/>
            <person name="Kimberley A.M."/>
            <person name="King A."/>
            <person name="Laird G.K."/>
            <person name="Langford C."/>
            <person name="Lawlor S."/>
            <person name="Leongamornlert D.A."/>
            <person name="Leversha M."/>
            <person name="Lloyd C.R."/>
            <person name="Lloyd D.M."/>
            <person name="Loveland J.E."/>
            <person name="Lovell J."/>
            <person name="Martin S."/>
            <person name="Mashreghi-Mohammadi M."/>
            <person name="Maslen G.L."/>
            <person name="Matthews L."/>
            <person name="McCann O.T."/>
            <person name="McLaren S.J."/>
            <person name="McLay K."/>
            <person name="McMurray A."/>
            <person name="Moore M.J.F."/>
            <person name="Mullikin J.C."/>
            <person name="Niblett D."/>
            <person name="Nickerson T."/>
            <person name="Novik K.L."/>
            <person name="Oliver K."/>
            <person name="Overton-Larty E.K."/>
            <person name="Parker A."/>
            <person name="Patel R."/>
            <person name="Pearce A.V."/>
            <person name="Peck A.I."/>
            <person name="Phillimore B.J.C.T."/>
            <person name="Phillips S."/>
            <person name="Plumb R.W."/>
            <person name="Porter K.M."/>
            <person name="Ramsey Y."/>
            <person name="Ranby S.A."/>
            <person name="Rice C.M."/>
            <person name="Ross M.T."/>
            <person name="Searle S.M."/>
            <person name="Sehra H.K."/>
            <person name="Sheridan E."/>
            <person name="Skuce C.D."/>
            <person name="Smith S."/>
            <person name="Smith M."/>
            <person name="Spraggon L."/>
            <person name="Squares S.L."/>
            <person name="Steward C.A."/>
            <person name="Sycamore N."/>
            <person name="Tamlyn-Hall G."/>
            <person name="Tester J."/>
            <person name="Theaker A.J."/>
            <person name="Thomas D.W."/>
            <person name="Thorpe A."/>
            <person name="Tracey A."/>
            <person name="Tromans A."/>
            <person name="Tubby B."/>
            <person name="Wall M."/>
            <person name="Wallis J.M."/>
            <person name="West A.P."/>
            <person name="White S.S."/>
            <person name="Whitehead S.L."/>
            <person name="Whittaker H."/>
            <person name="Wild A."/>
            <person name="Willey D.J."/>
            <person name="Wilmer T.E."/>
            <person name="Wood J.M."/>
            <person name="Wray P.W."/>
            <person name="Wyatt J.C."/>
            <person name="Young L."/>
            <person name="Younger R.M."/>
            <person name="Bentley D.R."/>
            <person name="Coulson A."/>
            <person name="Durbin R.M."/>
            <person name="Hubbard T."/>
            <person name="Sulston J.E."/>
            <person name="Dunham I."/>
            <person name="Rogers J."/>
            <person name="Beck S."/>
        </authorList>
    </citation>
    <scope>NUCLEOTIDE SEQUENCE [LARGE SCALE GENOMIC DNA]</scope>
</reference>
<reference key="4">
    <citation type="journal article" date="2004" name="Genome Res.">
        <title>The status, quality, and expansion of the NIH full-length cDNA project: the Mammalian Gene Collection (MGC).</title>
        <authorList>
            <consortium name="The MGC Project Team"/>
        </authorList>
    </citation>
    <scope>NUCLEOTIDE SEQUENCE [LARGE SCALE MRNA]</scope>
    <source>
        <tissue>Hippocampus</tissue>
        <tissue>Testis</tissue>
    </source>
</reference>
<reference key="5">
    <citation type="journal article" date="1995" name="Biochem. Biophys. Res. Commun.">
        <title>Identification of a putative antioxidant response element in the 5'-flanking region of the human gamma-glutamylcysteine synthetase heavy subunit gene.</title>
        <authorList>
            <person name="Mulcahy R.T."/>
            <person name="Gipp J.J."/>
        </authorList>
    </citation>
    <scope>NUCLEOTIDE SEQUENCE [GENOMIC DNA] OF 1-27</scope>
    <source>
        <tissue>Foreskin fibroblast</tissue>
    </source>
</reference>
<reference key="6">
    <citation type="journal article" date="1999" name="Blood">
        <title>The molecular basis of a case of gamma-glutamylcysteine synthetase deficiency.</title>
        <authorList>
            <person name="Beutler E."/>
            <person name="Gelbart T."/>
            <person name="Kondo T."/>
            <person name="Matsunaga A.T."/>
        </authorList>
    </citation>
    <scope>NUCLEOTIDE SEQUENCE [GENOMIC DNA] OF 341-440</scope>
    <scope>VARIANT CNSHA7 LEU-370</scope>
</reference>
<reference key="7">
    <citation type="journal article" date="1998" name="Protein Expr. Purif.">
        <title>Expression and purification of human gamma-glutamylcysteine synthetase.</title>
        <authorList>
            <person name="Misra I."/>
            <person name="Griffith O.W."/>
        </authorList>
    </citation>
    <scope>FUNCTION</scope>
    <scope>CATALYTIC ACTIVITY</scope>
    <scope>BIOPHYSICOCHEMICAL PROPERTIES</scope>
    <scope>PATHWAY</scope>
</reference>
<reference key="8">
    <citation type="journal article" date="2010" name="Sci. Signal.">
        <title>Quantitative phosphoproteomics reveals widespread full phosphorylation site occupancy during mitosis.</title>
        <authorList>
            <person name="Olsen J.V."/>
            <person name="Vermeulen M."/>
            <person name="Santamaria A."/>
            <person name="Kumar C."/>
            <person name="Miller M.L."/>
            <person name="Jensen L.J."/>
            <person name="Gnad F."/>
            <person name="Cox J."/>
            <person name="Jensen T.S."/>
            <person name="Nigg E.A."/>
            <person name="Brunak S."/>
            <person name="Mann M."/>
        </authorList>
    </citation>
    <scope>ACETYLATION [LARGE SCALE ANALYSIS] AT MET-1</scope>
    <scope>PHOSPHORYLATION [LARGE SCALE ANALYSIS] AT SER-5 AND SER-8</scope>
    <scope>IDENTIFICATION BY MASS SPECTROMETRY [LARGE SCALE ANALYSIS]</scope>
    <source>
        <tissue>Cervix carcinoma</tissue>
    </source>
</reference>
<reference key="9">
    <citation type="journal article" date="2011" name="BMC Syst. Biol.">
        <title>Initial characterization of the human central proteome.</title>
        <authorList>
            <person name="Burkard T.R."/>
            <person name="Planyavsky M."/>
            <person name="Kaupe I."/>
            <person name="Breitwieser F.P."/>
            <person name="Buerckstuemmer T."/>
            <person name="Bennett K.L."/>
            <person name="Superti-Furga G."/>
            <person name="Colinge J."/>
        </authorList>
    </citation>
    <scope>IDENTIFICATION BY MASS SPECTROMETRY [LARGE SCALE ANALYSIS]</scope>
</reference>
<reference key="10">
    <citation type="journal article" date="2013" name="J. Proteome Res.">
        <title>Toward a comprehensive characterization of a human cancer cell phosphoproteome.</title>
        <authorList>
            <person name="Zhou H."/>
            <person name="Di Palma S."/>
            <person name="Preisinger C."/>
            <person name="Peng M."/>
            <person name="Polat A.N."/>
            <person name="Heck A.J."/>
            <person name="Mohammed S."/>
        </authorList>
    </citation>
    <scope>PHOSPHORYLATION [LARGE SCALE ANALYSIS] AT SER-8</scope>
    <scope>IDENTIFICATION BY MASS SPECTROMETRY [LARGE SCALE ANALYSIS]</scope>
    <source>
        <tissue>Cervix carcinoma</tissue>
        <tissue>Erythroleukemia</tissue>
    </source>
</reference>
<reference key="11">
    <citation type="journal article" date="2014" name="J. Proteomics">
        <title>An enzyme assisted RP-RPLC approach for in-depth analysis of human liver phosphoproteome.</title>
        <authorList>
            <person name="Bian Y."/>
            <person name="Song C."/>
            <person name="Cheng K."/>
            <person name="Dong M."/>
            <person name="Wang F."/>
            <person name="Huang J."/>
            <person name="Sun D."/>
            <person name="Wang L."/>
            <person name="Ye M."/>
            <person name="Zou H."/>
        </authorList>
    </citation>
    <scope>IDENTIFICATION BY MASS SPECTROMETRY [LARGE SCALE ANALYSIS]</scope>
    <source>
        <tissue>Liver</tissue>
    </source>
</reference>
<reference key="12">
    <citation type="journal article" date="2000" name="Blood">
        <title>A missense mutation in the heavy subunit of gamma-glutamylcysteine synthetase gene causes hemolytic anemia.</title>
        <authorList>
            <person name="Ristoff E."/>
            <person name="Augustson C."/>
            <person name="Geissler J."/>
            <person name="de Rijk T."/>
            <person name="Carlsson K."/>
            <person name="Luo J.-L."/>
            <person name="Andersson K."/>
            <person name="Weening R.S."/>
            <person name="van Zwieten R."/>
            <person name="Larsson A."/>
            <person name="Roos D."/>
        </authorList>
    </citation>
    <scope>VARIANT CNSHA7 LEU-158</scope>
</reference>
<reference key="13">
    <citation type="journal article" date="2003" name="Blood">
        <title>A novel missense mutation in the gamma-glutamylcysteine synthetase catalytic subunit gene causes both decreased enzymatic activity and glutathione production.</title>
        <authorList>
            <person name="Hamilton D."/>
            <person name="Wu J.H."/>
            <person name="Alaoui-Jamali M."/>
            <person name="Batist G."/>
        </authorList>
    </citation>
    <scope>VARIANT CNSHA7 CYS-127</scope>
    <scope>BIOPHYSICOCHEMICAL PROPERTIES</scope>
    <scope>CATALYTIC ACTIVITY</scope>
    <scope>CHARACTERIZATION OF VARIANT CNSHA7 CYS-127</scope>
</reference>
<accession>P48506</accession>
<accession>Q14399</accession>
<sequence length="637" mass="72766">MGLLSQGSPLSWEETKRHADHVRRHGILQFLHIYHAVKDRHKDVLKWGDEVEYMLVSFDHENKKVRLVLSGEKVLETLQEKGERTNPNHPTLWRPEYGSYMIEGTPGQPYGGTMSEFNTVEANMRKRRKEATSILEENQALCTITSFPRLGCPGFTLPEVKPNPVEGGASKSLFFPDEAINKHPRFSTLTRNIRHRRGEKVVINVPIFKDKNTPSPFIETFTEDDEASRASKPDHIYMDAMGFGMGNCCLQVTFQACSISEARYLYDQLATICPIVMALSAASPFYRGYVSDIDCRWGVISASVDDRTREERGLEPLKNNNYRISKSRYDSIDSYLSKCGEKYNDIDLTIDKEIYEQLLQEGIDHLLAQHVAHLFIRDPLTLFEEKIHLDDANESDHFENIQSTNWQTMRFKPPPPNSDIGWRVEFRPMEVQLTDFENSAYVVFVVLLTRVILSYKLDFLIPLSKVDENMKVAQKRDAVLQGMFYFRKDICKGGNAVVDGCGKAQNSTELAAEEYTLMSIDTIINGKEGVFPGLIPILNSYLENMEVDVDTRCSILNYLKLIKKRASGELMTVARWMREFIANHPDYKQDSVITDEMNYSLILKCNQIANELCECPELLGSAFRKVKYSGSKTDSSN</sequence>
<organism>
    <name type="scientific">Homo sapiens</name>
    <name type="common">Human</name>
    <dbReference type="NCBI Taxonomy" id="9606"/>
    <lineage>
        <taxon>Eukaryota</taxon>
        <taxon>Metazoa</taxon>
        <taxon>Chordata</taxon>
        <taxon>Craniata</taxon>
        <taxon>Vertebrata</taxon>
        <taxon>Euteleostomi</taxon>
        <taxon>Mammalia</taxon>
        <taxon>Eutheria</taxon>
        <taxon>Euarchontoglires</taxon>
        <taxon>Primates</taxon>
        <taxon>Haplorrhini</taxon>
        <taxon>Catarrhini</taxon>
        <taxon>Hominidae</taxon>
        <taxon>Homo</taxon>
    </lineage>
</organism>
<comment type="function">
    <text evidence="5">Catalyzes the ATP-dependent ligation of L-glutamate and L-cysteine and participates in the first and rate-limiting step in glutathione biosynthesis.</text>
</comment>
<comment type="catalytic activity">
    <reaction evidence="4 5">
        <text>L-cysteine + L-glutamate + ATP = gamma-L-glutamyl-L-cysteine + ADP + phosphate + H(+)</text>
        <dbReference type="Rhea" id="RHEA:13285"/>
        <dbReference type="ChEBI" id="CHEBI:15378"/>
        <dbReference type="ChEBI" id="CHEBI:29985"/>
        <dbReference type="ChEBI" id="CHEBI:30616"/>
        <dbReference type="ChEBI" id="CHEBI:35235"/>
        <dbReference type="ChEBI" id="CHEBI:43474"/>
        <dbReference type="ChEBI" id="CHEBI:58173"/>
        <dbReference type="ChEBI" id="CHEBI:456216"/>
        <dbReference type="EC" id="6.3.2.2"/>
    </reaction>
    <physiologicalReaction direction="left-to-right" evidence="8 9">
        <dbReference type="Rhea" id="RHEA:13286"/>
    </physiologicalReaction>
</comment>
<comment type="catalytic activity">
    <reaction evidence="5">
        <text>(2S)-2-aminobutanoate + L-glutamate + ATP = gamma-L-glutamyl-(2S)-2-aminobutanoate + ADP + phosphate + H(+)</text>
        <dbReference type="Rhea" id="RHEA:72067"/>
        <dbReference type="ChEBI" id="CHEBI:15378"/>
        <dbReference type="ChEBI" id="CHEBI:29985"/>
        <dbReference type="ChEBI" id="CHEBI:30616"/>
        <dbReference type="ChEBI" id="CHEBI:43474"/>
        <dbReference type="ChEBI" id="CHEBI:74359"/>
        <dbReference type="ChEBI" id="CHEBI:189406"/>
        <dbReference type="ChEBI" id="CHEBI:456216"/>
    </reaction>
    <physiologicalReaction direction="left-to-right" evidence="1">
        <dbReference type="Rhea" id="RHEA:72068"/>
    </physiologicalReaction>
</comment>
<comment type="activity regulation">
    <text>Feedback inhibition by glutathione.</text>
</comment>
<comment type="biophysicochemical properties">
    <kinetics>
        <KM evidence="5">1.8 mM for L-glutamate</KM>
        <KM evidence="4">7.16 mM for L-glutamate</KM>
        <KM evidence="5">0.1 mM for L-cysteine</KM>
        <KM evidence="5">1.3 mM for L-aminobutyrate</KM>
        <KM evidence="4">2.39 mM for L-aminobutyrate</KM>
        <KM evidence="5">0.4 mM for ATP</KM>
        <Vmax evidence="5">1650.0 umol/h/mg enzyme</Vmax>
        <Vmax evidence="4">531.75 umol/h/mg enzyme</Vmax>
    </kinetics>
</comment>
<comment type="pathway">
    <text evidence="9">Sulfur metabolism; glutathione biosynthesis; glutathione from L-cysteine and L-glutamate: step 1/2.</text>
</comment>
<comment type="subunit">
    <text>Heterodimer of a catalytic heavy chain and a regulatory light chain.</text>
</comment>
<comment type="interaction">
    <interactant intactId="EBI-2832840">
        <id>P48506</id>
    </interactant>
    <interactant intactId="EBI-1051387">
        <id>P48507</id>
        <label>GCLM</label>
    </interactant>
    <organismsDiffer>false</organismsDiffer>
    <experiments>4</experiments>
</comment>
<comment type="disease" evidence="2 3 4">
    <disease id="DI-01703">
        <name>Anemia, congenital, non-spherocytic hemolytic, 7</name>
        <acronym>CNSHA7</acronym>
        <description>An autosomal recessive disease characterized by hemolytic anemia, glutathione deficiency, myopathy, late-onset spinocerebellar degeneration, and peripheral neuropathy.</description>
        <dbReference type="MIM" id="230450"/>
    </disease>
    <text>The disease is caused by variants affecting the gene represented in this entry.</text>
</comment>
<comment type="similarity">
    <text evidence="7">Belongs to the glutamate--cysteine ligase type 3 family.</text>
</comment>
<gene>
    <name evidence="10" type="primary">GCLC</name>
    <name type="synonym">GLCL</name>
    <name type="synonym">GLCLC</name>
</gene>
<feature type="chain" id="PRO_0000192563" description="Glutamate--cysteine ligase catalytic subunit">
    <location>
        <begin position="1"/>
        <end position="637"/>
    </location>
</feature>
<feature type="modified residue" description="N-acetylmethionine" evidence="11">
    <location>
        <position position="1"/>
    </location>
</feature>
<feature type="modified residue" description="Phosphoserine" evidence="11">
    <location>
        <position position="5"/>
    </location>
</feature>
<feature type="modified residue" description="Phosphoserine" evidence="11 12">
    <location>
        <position position="8"/>
    </location>
</feature>
<feature type="sequence variant" id="VAR_014884" description="In dbSNP:rs2066512.">
    <original>L</original>
    <variation>S</variation>
    <location>
        <position position="55"/>
    </location>
</feature>
<feature type="sequence variant" id="VAR_021110" description="In CNSHA7; strongly decreased glutamate-cysteine ligase activity; dbSNP:rs760031222." evidence="4">
    <original>R</original>
    <variation>C</variation>
    <location>
        <position position="127"/>
    </location>
</feature>
<feature type="sequence variant" id="VAR_015403" description="In CNSHA7." evidence="3">
    <original>P</original>
    <variation>L</variation>
    <location>
        <position position="158"/>
    </location>
</feature>
<feature type="sequence variant" id="VAR_013514" description="In CNSHA7; dbSNP:rs121907946." evidence="2">
    <original>H</original>
    <variation>L</variation>
    <location>
        <position position="370"/>
    </location>
</feature>
<feature type="sequence variant" id="VAR_021100" description="In dbSNP:rs17883718." evidence="6">
    <original>P</original>
    <variation>S</variation>
    <location>
        <position position="462"/>
    </location>
</feature>
<evidence type="ECO:0000250" key="1">
    <source>
        <dbReference type="UniProtKB" id="P97494"/>
    </source>
</evidence>
<evidence type="ECO:0000269" key="2">
    <source>
    </source>
</evidence>
<evidence type="ECO:0000269" key="3">
    <source>
    </source>
</evidence>
<evidence type="ECO:0000269" key="4">
    <source>
    </source>
</evidence>
<evidence type="ECO:0000269" key="5">
    <source>
    </source>
</evidence>
<evidence type="ECO:0000269" key="6">
    <source ref="2"/>
</evidence>
<evidence type="ECO:0000305" key="7"/>
<evidence type="ECO:0000305" key="8">
    <source>
    </source>
</evidence>
<evidence type="ECO:0000305" key="9">
    <source>
    </source>
</evidence>
<evidence type="ECO:0000312" key="10">
    <source>
        <dbReference type="HGNC" id="HGNC:4311"/>
    </source>
</evidence>
<evidence type="ECO:0007744" key="11">
    <source>
    </source>
</evidence>
<evidence type="ECO:0007744" key="12">
    <source>
    </source>
</evidence>
<protein>
    <recommendedName>
        <fullName evidence="7">Glutamate--cysteine ligase catalytic subunit</fullName>
        <ecNumber evidence="4 5">6.3.2.2</ecNumber>
    </recommendedName>
    <alternativeName>
        <fullName>GCS heavy chain</fullName>
    </alternativeName>
    <alternativeName>
        <fullName>Gamma-ECS</fullName>
    </alternativeName>
    <alternativeName>
        <fullName>Gamma-glutamylcysteine synthetase</fullName>
    </alternativeName>
</protein>
<keyword id="KW-0007">Acetylation</keyword>
<keyword id="KW-0067">ATP-binding</keyword>
<keyword id="KW-0225">Disease variant</keyword>
<keyword id="KW-0317">Glutathione biosynthesis</keyword>
<keyword id="KW-0360">Hereditary hemolytic anemia</keyword>
<keyword id="KW-0436">Ligase</keyword>
<keyword id="KW-0547">Nucleotide-binding</keyword>
<keyword id="KW-0597">Phosphoprotein</keyword>
<keyword id="KW-1267">Proteomics identification</keyword>
<keyword id="KW-1185">Reference proteome</keyword>
<name>GSH1_HUMAN</name>